<protein>
    <recommendedName>
        <fullName evidence="1">SsrA-binding protein</fullName>
    </recommendedName>
    <alternativeName>
        <fullName evidence="1">Small protein B</fullName>
    </alternativeName>
</protein>
<reference key="1">
    <citation type="submission" date="2007-09" db="EMBL/GenBank/DDBJ databases">
        <title>Complete genome sequence of Rickettsia rickettsii.</title>
        <authorList>
            <person name="Madan A."/>
            <person name="Fahey J."/>
            <person name="Helton E."/>
            <person name="Ketteman M."/>
            <person name="Madan A."/>
            <person name="Rodrigues S."/>
            <person name="Sanchez A."/>
            <person name="Dasch G."/>
            <person name="Eremeeva M."/>
        </authorList>
    </citation>
    <scope>NUCLEOTIDE SEQUENCE [LARGE SCALE GENOMIC DNA]</scope>
    <source>
        <strain>Sheila Smith</strain>
    </source>
</reference>
<sequence length="152" mass="17903">MTEYKKVIAQNKKALFHYFIEERLEAGIVLKGSEVRSLRQGKASIEESHAADTGHEVFLYNCHIAEYEKANRFNHATRRPRKLLLHTKEIKKIIGRIRIKGYTLVALSMYFNKKNKVKVELGIAKGKKLHDKRESIKEKDWKRDQSRLIRQK</sequence>
<comment type="function">
    <text evidence="1">Required for rescue of stalled ribosomes mediated by trans-translation. Binds to transfer-messenger RNA (tmRNA), required for stable association of tmRNA with ribosomes. tmRNA and SmpB together mimic tRNA shape, replacing the anticodon stem-loop with SmpB. tmRNA is encoded by the ssrA gene; the 2 termini fold to resemble tRNA(Ala) and it encodes a 'tag peptide', a short internal open reading frame. During trans-translation Ala-aminoacylated tmRNA acts like a tRNA, entering the A-site of stalled ribosomes, displacing the stalled mRNA. The ribosome then switches to translate the ORF on the tmRNA; the nascent peptide is terminated with the 'tag peptide' encoded by the tmRNA and targeted for degradation. The ribosome is freed to recommence translation, which seems to be the essential function of trans-translation.</text>
</comment>
<comment type="subcellular location">
    <subcellularLocation>
        <location evidence="1">Cytoplasm</location>
    </subcellularLocation>
    <text evidence="1">The tmRNA-SmpB complex associates with stalled 70S ribosomes.</text>
</comment>
<comment type="similarity">
    <text evidence="1">Belongs to the SmpB family.</text>
</comment>
<keyword id="KW-0963">Cytoplasm</keyword>
<keyword id="KW-0694">RNA-binding</keyword>
<organism>
    <name type="scientific">Rickettsia rickettsii (strain Sheila Smith)</name>
    <dbReference type="NCBI Taxonomy" id="392021"/>
    <lineage>
        <taxon>Bacteria</taxon>
        <taxon>Pseudomonadati</taxon>
        <taxon>Pseudomonadota</taxon>
        <taxon>Alphaproteobacteria</taxon>
        <taxon>Rickettsiales</taxon>
        <taxon>Rickettsiaceae</taxon>
        <taxon>Rickettsieae</taxon>
        <taxon>Rickettsia</taxon>
        <taxon>spotted fever group</taxon>
    </lineage>
</organism>
<accession>A8GS26</accession>
<dbReference type="EMBL" id="CP000848">
    <property type="protein sequence ID" value="ABV76201.1"/>
    <property type="molecule type" value="Genomic_DNA"/>
</dbReference>
<dbReference type="RefSeq" id="WP_012150787.1">
    <property type="nucleotide sequence ID" value="NZ_CP121767.1"/>
</dbReference>
<dbReference type="SMR" id="A8GS26"/>
<dbReference type="GeneID" id="79937340"/>
<dbReference type="KEGG" id="rri:A1G_03350"/>
<dbReference type="HOGENOM" id="CLU_108953_0_1_5"/>
<dbReference type="Proteomes" id="UP000006832">
    <property type="component" value="Chromosome"/>
</dbReference>
<dbReference type="GO" id="GO:0005829">
    <property type="term" value="C:cytosol"/>
    <property type="evidence" value="ECO:0007669"/>
    <property type="project" value="TreeGrafter"/>
</dbReference>
<dbReference type="GO" id="GO:0003723">
    <property type="term" value="F:RNA binding"/>
    <property type="evidence" value="ECO:0007669"/>
    <property type="project" value="UniProtKB-UniRule"/>
</dbReference>
<dbReference type="GO" id="GO:0070929">
    <property type="term" value="P:trans-translation"/>
    <property type="evidence" value="ECO:0007669"/>
    <property type="project" value="UniProtKB-UniRule"/>
</dbReference>
<dbReference type="CDD" id="cd09294">
    <property type="entry name" value="SmpB"/>
    <property type="match status" value="1"/>
</dbReference>
<dbReference type="Gene3D" id="2.40.280.10">
    <property type="match status" value="1"/>
</dbReference>
<dbReference type="HAMAP" id="MF_00023">
    <property type="entry name" value="SmpB"/>
    <property type="match status" value="1"/>
</dbReference>
<dbReference type="InterPro" id="IPR023620">
    <property type="entry name" value="SmpB"/>
</dbReference>
<dbReference type="InterPro" id="IPR000037">
    <property type="entry name" value="SsrA-bd_prot"/>
</dbReference>
<dbReference type="NCBIfam" id="NF003843">
    <property type="entry name" value="PRK05422.1"/>
    <property type="match status" value="1"/>
</dbReference>
<dbReference type="NCBIfam" id="TIGR00086">
    <property type="entry name" value="smpB"/>
    <property type="match status" value="1"/>
</dbReference>
<dbReference type="PANTHER" id="PTHR30308:SF2">
    <property type="entry name" value="SSRA-BINDING PROTEIN"/>
    <property type="match status" value="1"/>
</dbReference>
<dbReference type="PANTHER" id="PTHR30308">
    <property type="entry name" value="TMRNA-BINDING COMPONENT OF TRANS-TRANSLATION TAGGING COMPLEX"/>
    <property type="match status" value="1"/>
</dbReference>
<dbReference type="Pfam" id="PF01668">
    <property type="entry name" value="SmpB"/>
    <property type="match status" value="1"/>
</dbReference>
<dbReference type="SUPFAM" id="SSF74982">
    <property type="entry name" value="Small protein B (SmpB)"/>
    <property type="match status" value="1"/>
</dbReference>
<name>SSRP_RICRS</name>
<proteinExistence type="inferred from homology"/>
<gene>
    <name evidence="1" type="primary">smpB</name>
    <name type="ordered locus">A1G_03350</name>
</gene>
<evidence type="ECO:0000255" key="1">
    <source>
        <dbReference type="HAMAP-Rule" id="MF_00023"/>
    </source>
</evidence>
<feature type="chain" id="PRO_1000002131" description="SsrA-binding protein">
    <location>
        <begin position="1"/>
        <end position="152"/>
    </location>
</feature>